<feature type="chain" id="PRO_0000413341" description="Glutamyl-tRNA(Gln) amidotransferase subunit A, chloroplastic/mitochondrial">
    <location>
        <begin position="1"/>
        <end position="543"/>
    </location>
</feature>
<feature type="active site" description="Charge relay system" evidence="1">
    <location>
        <position position="123"/>
    </location>
</feature>
<feature type="active site" description="Charge relay system" evidence="1">
    <location>
        <position position="198"/>
    </location>
</feature>
<feature type="active site" description="Acyl-ester intermediate" evidence="1">
    <location>
        <position position="222"/>
    </location>
</feature>
<keyword id="KW-0067">ATP-binding</keyword>
<keyword id="KW-0150">Chloroplast</keyword>
<keyword id="KW-0436">Ligase</keyword>
<keyword id="KW-0496">Mitochondrion</keyword>
<keyword id="KW-0547">Nucleotide-binding</keyword>
<keyword id="KW-0934">Plastid</keyword>
<keyword id="KW-0648">Protein biosynthesis</keyword>
<keyword id="KW-1185">Reference proteome</keyword>
<proteinExistence type="inferred from homology"/>
<protein>
    <recommendedName>
        <fullName evidence="1">Glutamyl-tRNA(Gln) amidotransferase subunit A, chloroplastic/mitochondrial</fullName>
        <shortName evidence="1">Glu-AdT subunit A</shortName>
        <ecNumber evidence="1">6.3.5.7</ecNumber>
    </recommendedName>
</protein>
<name>GATA_ORYSI</name>
<comment type="function">
    <text evidence="1">Allows the formation of correctly charged Gln-tRNA(Gln) through the transamidation of misacylated Glu-tRNA(Gln) in chloroplasts and mitochondria. The reaction takes place in the presence of glutamine and ATP through an activated gamma-phospho-Glu-tRNA(Gln).</text>
</comment>
<comment type="catalytic activity">
    <reaction evidence="1">
        <text>L-glutamyl-tRNA(Gln) + L-glutamine + ATP + H2O = L-glutaminyl-tRNA(Gln) + L-glutamate + ADP + phosphate + H(+)</text>
        <dbReference type="Rhea" id="RHEA:17521"/>
        <dbReference type="Rhea" id="RHEA-COMP:9681"/>
        <dbReference type="Rhea" id="RHEA-COMP:9684"/>
        <dbReference type="ChEBI" id="CHEBI:15377"/>
        <dbReference type="ChEBI" id="CHEBI:15378"/>
        <dbReference type="ChEBI" id="CHEBI:29985"/>
        <dbReference type="ChEBI" id="CHEBI:30616"/>
        <dbReference type="ChEBI" id="CHEBI:43474"/>
        <dbReference type="ChEBI" id="CHEBI:58359"/>
        <dbReference type="ChEBI" id="CHEBI:78520"/>
        <dbReference type="ChEBI" id="CHEBI:78521"/>
        <dbReference type="ChEBI" id="CHEBI:456216"/>
        <dbReference type="EC" id="6.3.5.7"/>
    </reaction>
</comment>
<comment type="subunit">
    <text evidence="1">Subunit of the heterotrimeric GatCAB amidotransferase (AdT) complex, composed of A, B and C subunits.</text>
</comment>
<comment type="subcellular location">
    <subcellularLocation>
        <location evidence="1">Mitochondrion</location>
    </subcellularLocation>
    <subcellularLocation>
        <location evidence="1">Plastid</location>
        <location evidence="1">Chloroplast stroma</location>
    </subcellularLocation>
</comment>
<comment type="miscellaneous">
    <text evidence="1">This protein may be expected to contain an N-terminal transit peptide but none has been predicted.</text>
</comment>
<comment type="similarity">
    <text evidence="1">Belongs to the amidase family. GatA subfamily.</text>
</comment>
<reference key="1">
    <citation type="journal article" date="2002" name="Nature">
        <title>Sequence and analysis of rice chromosome 4.</title>
        <authorList>
            <person name="Feng Q."/>
            <person name="Zhang Y."/>
            <person name="Hao P."/>
            <person name="Wang S."/>
            <person name="Fu G."/>
            <person name="Huang Y."/>
            <person name="Li Y."/>
            <person name="Zhu J."/>
            <person name="Liu Y."/>
            <person name="Hu X."/>
            <person name="Jia P."/>
            <person name="Zhang Y."/>
            <person name="Zhao Q."/>
            <person name="Ying K."/>
            <person name="Yu S."/>
            <person name="Tang Y."/>
            <person name="Weng Q."/>
            <person name="Zhang L."/>
            <person name="Lu Y."/>
            <person name="Mu J."/>
            <person name="Lu Y."/>
            <person name="Zhang L.S."/>
            <person name="Yu Z."/>
            <person name="Fan D."/>
            <person name="Liu X."/>
            <person name="Lu T."/>
            <person name="Li C."/>
            <person name="Wu Y."/>
            <person name="Sun T."/>
            <person name="Lei H."/>
            <person name="Li T."/>
            <person name="Hu H."/>
            <person name="Guan J."/>
            <person name="Wu M."/>
            <person name="Zhang R."/>
            <person name="Zhou B."/>
            <person name="Chen Z."/>
            <person name="Chen L."/>
            <person name="Jin Z."/>
            <person name="Wang R."/>
            <person name="Yin H."/>
            <person name="Cai Z."/>
            <person name="Ren S."/>
            <person name="Lv G."/>
            <person name="Gu W."/>
            <person name="Zhu G."/>
            <person name="Tu Y."/>
            <person name="Jia J."/>
            <person name="Zhang Y."/>
            <person name="Chen J."/>
            <person name="Kang H."/>
            <person name="Chen X."/>
            <person name="Shao C."/>
            <person name="Sun Y."/>
            <person name="Hu Q."/>
            <person name="Zhang X."/>
            <person name="Zhang W."/>
            <person name="Wang L."/>
            <person name="Ding C."/>
            <person name="Sheng H."/>
            <person name="Gu J."/>
            <person name="Chen S."/>
            <person name="Ni L."/>
            <person name="Zhu F."/>
            <person name="Chen W."/>
            <person name="Lan L."/>
            <person name="Lai Y."/>
            <person name="Cheng Z."/>
            <person name="Gu M."/>
            <person name="Jiang J."/>
            <person name="Li J."/>
            <person name="Hong G."/>
            <person name="Xue Y."/>
            <person name="Han B."/>
        </authorList>
    </citation>
    <scope>NUCLEOTIDE SEQUENCE [LARGE SCALE GENOMIC DNA]</scope>
    <source>
        <strain>cv. Guang-Lu-Ai No.4</strain>
    </source>
</reference>
<reference key="2">
    <citation type="journal article" date="2005" name="PLoS Biol.">
        <title>The genomes of Oryza sativa: a history of duplications.</title>
        <authorList>
            <person name="Yu J."/>
            <person name="Wang J."/>
            <person name="Lin W."/>
            <person name="Li S."/>
            <person name="Li H."/>
            <person name="Zhou J."/>
            <person name="Ni P."/>
            <person name="Dong W."/>
            <person name="Hu S."/>
            <person name="Zeng C."/>
            <person name="Zhang J."/>
            <person name="Zhang Y."/>
            <person name="Li R."/>
            <person name="Xu Z."/>
            <person name="Li S."/>
            <person name="Li X."/>
            <person name="Zheng H."/>
            <person name="Cong L."/>
            <person name="Lin L."/>
            <person name="Yin J."/>
            <person name="Geng J."/>
            <person name="Li G."/>
            <person name="Shi J."/>
            <person name="Liu J."/>
            <person name="Lv H."/>
            <person name="Li J."/>
            <person name="Wang J."/>
            <person name="Deng Y."/>
            <person name="Ran L."/>
            <person name="Shi X."/>
            <person name="Wang X."/>
            <person name="Wu Q."/>
            <person name="Li C."/>
            <person name="Ren X."/>
            <person name="Wang J."/>
            <person name="Wang X."/>
            <person name="Li D."/>
            <person name="Liu D."/>
            <person name="Zhang X."/>
            <person name="Ji Z."/>
            <person name="Zhao W."/>
            <person name="Sun Y."/>
            <person name="Zhang Z."/>
            <person name="Bao J."/>
            <person name="Han Y."/>
            <person name="Dong L."/>
            <person name="Ji J."/>
            <person name="Chen P."/>
            <person name="Wu S."/>
            <person name="Liu J."/>
            <person name="Xiao Y."/>
            <person name="Bu D."/>
            <person name="Tan J."/>
            <person name="Yang L."/>
            <person name="Ye C."/>
            <person name="Zhang J."/>
            <person name="Xu J."/>
            <person name="Zhou Y."/>
            <person name="Yu Y."/>
            <person name="Zhang B."/>
            <person name="Zhuang S."/>
            <person name="Wei H."/>
            <person name="Liu B."/>
            <person name="Lei M."/>
            <person name="Yu H."/>
            <person name="Li Y."/>
            <person name="Xu H."/>
            <person name="Wei S."/>
            <person name="He X."/>
            <person name="Fang L."/>
            <person name="Zhang Z."/>
            <person name="Zhang Y."/>
            <person name="Huang X."/>
            <person name="Su Z."/>
            <person name="Tong W."/>
            <person name="Li J."/>
            <person name="Tong Z."/>
            <person name="Li S."/>
            <person name="Ye J."/>
            <person name="Wang L."/>
            <person name="Fang L."/>
            <person name="Lei T."/>
            <person name="Chen C.-S."/>
            <person name="Chen H.-C."/>
            <person name="Xu Z."/>
            <person name="Li H."/>
            <person name="Huang H."/>
            <person name="Zhang F."/>
            <person name="Xu H."/>
            <person name="Li N."/>
            <person name="Zhao C."/>
            <person name="Li S."/>
            <person name="Dong L."/>
            <person name="Huang Y."/>
            <person name="Li L."/>
            <person name="Xi Y."/>
            <person name="Qi Q."/>
            <person name="Li W."/>
            <person name="Zhang B."/>
            <person name="Hu W."/>
            <person name="Zhang Y."/>
            <person name="Tian X."/>
            <person name="Jiao Y."/>
            <person name="Liang X."/>
            <person name="Jin J."/>
            <person name="Gao L."/>
            <person name="Zheng W."/>
            <person name="Hao B."/>
            <person name="Liu S.-M."/>
            <person name="Wang W."/>
            <person name="Yuan L."/>
            <person name="Cao M."/>
            <person name="McDermott J."/>
            <person name="Samudrala R."/>
            <person name="Wang J."/>
            <person name="Wong G.K.-S."/>
            <person name="Yang H."/>
        </authorList>
    </citation>
    <scope>NUCLEOTIDE SEQUENCE [LARGE SCALE GENOMIC DNA]</scope>
    <source>
        <strain>cv. 93-11</strain>
    </source>
</reference>
<dbReference type="EC" id="6.3.5.7" evidence="1"/>
<dbReference type="EMBL" id="AL732332">
    <property type="protein sequence ID" value="CAH68239.1"/>
    <property type="molecule type" value="Genomic_DNA"/>
</dbReference>
<dbReference type="EMBL" id="CM000129">
    <property type="protein sequence ID" value="EAY95768.1"/>
    <property type="molecule type" value="Genomic_DNA"/>
</dbReference>
<dbReference type="SMR" id="Q25A68"/>
<dbReference type="STRING" id="39946.Q25A68"/>
<dbReference type="EnsemblPlants" id="BGIOSGA014241-TA">
    <property type="protein sequence ID" value="BGIOSGA014241-PA"/>
    <property type="gene ID" value="BGIOSGA014241"/>
</dbReference>
<dbReference type="EnsemblPlants" id="OsMH63_04G028950_02">
    <property type="protein sequence ID" value="OsMH63_04G028950_02"/>
    <property type="gene ID" value="OsMH63_04G028950"/>
</dbReference>
<dbReference type="EnsemblPlants" id="OsZS97_04G029090_01">
    <property type="protein sequence ID" value="OsZS97_04G029090_01"/>
    <property type="gene ID" value="OsZS97_04G029090"/>
</dbReference>
<dbReference type="Gramene" id="BGIOSGA014241-TA">
    <property type="protein sequence ID" value="BGIOSGA014241-PA"/>
    <property type="gene ID" value="BGIOSGA014241"/>
</dbReference>
<dbReference type="Gramene" id="OsMH63_04G028950_02">
    <property type="protein sequence ID" value="OsMH63_04G028950_02"/>
    <property type="gene ID" value="OsMH63_04G028950"/>
</dbReference>
<dbReference type="Gramene" id="OsZS97_04G029090_01">
    <property type="protein sequence ID" value="OsZS97_04G029090_01"/>
    <property type="gene ID" value="OsZS97_04G029090"/>
</dbReference>
<dbReference type="HOGENOM" id="CLU_009600_0_3_1"/>
<dbReference type="OMA" id="QPASYCG"/>
<dbReference type="Proteomes" id="UP000007015">
    <property type="component" value="Chromosome 4"/>
</dbReference>
<dbReference type="GO" id="GO:0009570">
    <property type="term" value="C:chloroplast stroma"/>
    <property type="evidence" value="ECO:0007669"/>
    <property type="project" value="UniProtKB-SubCell"/>
</dbReference>
<dbReference type="GO" id="GO:0030956">
    <property type="term" value="C:glutamyl-tRNA(Gln) amidotransferase complex"/>
    <property type="evidence" value="ECO:0007669"/>
    <property type="project" value="UniProtKB-UniRule"/>
</dbReference>
<dbReference type="GO" id="GO:0005739">
    <property type="term" value="C:mitochondrion"/>
    <property type="evidence" value="ECO:0007669"/>
    <property type="project" value="UniProtKB-SubCell"/>
</dbReference>
<dbReference type="GO" id="GO:0005524">
    <property type="term" value="F:ATP binding"/>
    <property type="evidence" value="ECO:0007669"/>
    <property type="project" value="UniProtKB-KW"/>
</dbReference>
<dbReference type="GO" id="GO:0050567">
    <property type="term" value="F:glutaminyl-tRNA synthase (glutamine-hydrolyzing) activity"/>
    <property type="evidence" value="ECO:0007669"/>
    <property type="project" value="UniProtKB-UniRule"/>
</dbReference>
<dbReference type="GO" id="GO:0016811">
    <property type="term" value="F:hydrolase activity, acting on carbon-nitrogen (but not peptide) bonds, in linear amides"/>
    <property type="evidence" value="ECO:0007669"/>
    <property type="project" value="UniProtKB-ARBA"/>
</dbReference>
<dbReference type="GO" id="GO:0070681">
    <property type="term" value="P:glutaminyl-tRNAGln biosynthesis via transamidation"/>
    <property type="evidence" value="ECO:0007669"/>
    <property type="project" value="UniProtKB-UniRule"/>
</dbReference>
<dbReference type="GO" id="GO:0032543">
    <property type="term" value="P:mitochondrial translation"/>
    <property type="evidence" value="ECO:0007669"/>
    <property type="project" value="UniProtKB-UniRule"/>
</dbReference>
<dbReference type="Gene3D" id="3.90.1300.10">
    <property type="entry name" value="Amidase signature (AS) domain"/>
    <property type="match status" value="1"/>
</dbReference>
<dbReference type="HAMAP" id="MF_00120">
    <property type="entry name" value="GatA"/>
    <property type="match status" value="1"/>
</dbReference>
<dbReference type="InterPro" id="IPR000120">
    <property type="entry name" value="Amidase"/>
</dbReference>
<dbReference type="InterPro" id="IPR020556">
    <property type="entry name" value="Amidase_CS"/>
</dbReference>
<dbReference type="InterPro" id="IPR023631">
    <property type="entry name" value="Amidase_dom"/>
</dbReference>
<dbReference type="InterPro" id="IPR036928">
    <property type="entry name" value="AS_sf"/>
</dbReference>
<dbReference type="InterPro" id="IPR004412">
    <property type="entry name" value="GatA"/>
</dbReference>
<dbReference type="NCBIfam" id="TIGR00132">
    <property type="entry name" value="gatA"/>
    <property type="match status" value="1"/>
</dbReference>
<dbReference type="PANTHER" id="PTHR11895:SF7">
    <property type="entry name" value="GLUTAMYL-TRNA(GLN) AMIDOTRANSFERASE SUBUNIT A, MITOCHONDRIAL"/>
    <property type="match status" value="1"/>
</dbReference>
<dbReference type="PANTHER" id="PTHR11895">
    <property type="entry name" value="TRANSAMIDASE"/>
    <property type="match status" value="1"/>
</dbReference>
<dbReference type="Pfam" id="PF01425">
    <property type="entry name" value="Amidase"/>
    <property type="match status" value="1"/>
</dbReference>
<dbReference type="SUPFAM" id="SSF75304">
    <property type="entry name" value="Amidase signature (AS) enzymes"/>
    <property type="match status" value="1"/>
</dbReference>
<dbReference type="PROSITE" id="PS00571">
    <property type="entry name" value="AMIDASES"/>
    <property type="match status" value="1"/>
</dbReference>
<evidence type="ECO:0000255" key="1">
    <source>
        <dbReference type="HAMAP-Rule" id="MF_03150"/>
    </source>
</evidence>
<organism>
    <name type="scientific">Oryza sativa subsp. indica</name>
    <name type="common">Rice</name>
    <dbReference type="NCBI Taxonomy" id="39946"/>
    <lineage>
        <taxon>Eukaryota</taxon>
        <taxon>Viridiplantae</taxon>
        <taxon>Streptophyta</taxon>
        <taxon>Embryophyta</taxon>
        <taxon>Tracheophyta</taxon>
        <taxon>Spermatophyta</taxon>
        <taxon>Magnoliopsida</taxon>
        <taxon>Liliopsida</taxon>
        <taxon>Poales</taxon>
        <taxon>Poaceae</taxon>
        <taxon>BOP clade</taxon>
        <taxon>Oryzoideae</taxon>
        <taxon>Oryzeae</taxon>
        <taxon>Oryzinae</taxon>
        <taxon>Oryza</taxon>
        <taxon>Oryza sativa</taxon>
    </lineage>
</organism>
<sequence>MPPPLQAQRLLLSHRRLPSPHRRRFTAVSSLPSSPAKTVAAAAAHAPSSILSIRESLLSGERTAAEITAEYLSRLRRTEPSVRSFIHVADAAAEREAEELDRRIATEGLDAVGPLAGVLVGVKDNLCTANMPSTGGSRILDGYQPAYDATAVRRLREAGAIVVGKTNLDEFGMGSTTEGSGFQVTTNPWDDSRVPGGSSGGSASAVSARQCVVSLGSDTGGSVRQPASFCGVVGLKPTYGRVSRFGLMAYASSLDVVGCFGSSVVDTATILSVIAGHDKMDSTSSSHDVSDYKSELVPLDLLESKPLNGMRIGIIQETLGEGVETGVISSIKDAASHLEQLGSVVEEVSLPSFSLGLPAYYILASSEASSNLSRYDGIRYGRQVSGDDLNELYGGSRANGLGHEVKMRILMGTYALSAGYYDAYYKRAQQVRTLVKKSFKEALERYDILVSPAAPSAAYKIGEKINDPLAMYAGDTMTVNVNLAGLPALVVPCGFVEGGSAGLPVGLQMIGSPFSEGNLLRIGHIFEQTLQNYSFVPPLLAES</sequence>
<accession>Q25A68</accession>
<accession>A2XY58</accession>
<gene>
    <name evidence="1" type="primary">GATA</name>
    <name type="ORF">H0306F03.6</name>
    <name type="ORF">OsI_17641</name>
</gene>